<reference key="1">
    <citation type="journal article" date="1997" name="Nature">
        <title>The nucleotide sequence of Saccharomyces cerevisiae chromosome XIII.</title>
        <authorList>
            <person name="Bowman S."/>
            <person name="Churcher C.M."/>
            <person name="Badcock K."/>
            <person name="Brown D."/>
            <person name="Chillingworth T."/>
            <person name="Connor R."/>
            <person name="Dedman K."/>
            <person name="Devlin K."/>
            <person name="Gentles S."/>
            <person name="Hamlin N."/>
            <person name="Hunt S."/>
            <person name="Jagels K."/>
            <person name="Lye G."/>
            <person name="Moule S."/>
            <person name="Odell C."/>
            <person name="Pearson D."/>
            <person name="Rajandream M.A."/>
            <person name="Rice P."/>
            <person name="Skelton J."/>
            <person name="Walsh S.V."/>
            <person name="Whitehead S."/>
            <person name="Barrell B.G."/>
        </authorList>
    </citation>
    <scope>NUCLEOTIDE SEQUENCE [LARGE SCALE GENOMIC DNA]</scope>
    <source>
        <strain>ATCC 204508 / S288c</strain>
    </source>
</reference>
<reference key="2">
    <citation type="journal article" date="2014" name="G3 (Bethesda)">
        <title>The reference genome sequence of Saccharomyces cerevisiae: Then and now.</title>
        <authorList>
            <person name="Engel S.R."/>
            <person name="Dietrich F.S."/>
            <person name="Fisk D.G."/>
            <person name="Binkley G."/>
            <person name="Balakrishnan R."/>
            <person name="Costanzo M.C."/>
            <person name="Dwight S.S."/>
            <person name="Hitz B.C."/>
            <person name="Karra K."/>
            <person name="Nash R.S."/>
            <person name="Weng S."/>
            <person name="Wong E.D."/>
            <person name="Lloyd P."/>
            <person name="Skrzypek M.S."/>
            <person name="Miyasato S.R."/>
            <person name="Simison M."/>
            <person name="Cherry J.M."/>
        </authorList>
    </citation>
    <scope>GENOME REANNOTATION</scope>
    <source>
        <strain>ATCC 204508 / S288c</strain>
    </source>
</reference>
<reference key="3">
    <citation type="journal article" date="2007" name="Genome Res.">
        <title>Approaching a complete repository of sequence-verified protein-encoding clones for Saccharomyces cerevisiae.</title>
        <authorList>
            <person name="Hu Y."/>
            <person name="Rolfs A."/>
            <person name="Bhullar B."/>
            <person name="Murthy T.V.S."/>
            <person name="Zhu C."/>
            <person name="Berger M.F."/>
            <person name="Camargo A.A."/>
            <person name="Kelley F."/>
            <person name="McCarron S."/>
            <person name="Jepson D."/>
            <person name="Richardson A."/>
            <person name="Raphael J."/>
            <person name="Moreira D."/>
            <person name="Taycher E."/>
            <person name="Zuo D."/>
            <person name="Mohr S."/>
            <person name="Kane M.F."/>
            <person name="Williamson J."/>
            <person name="Simpson A.J.G."/>
            <person name="Bulyk M.L."/>
            <person name="Harlow E."/>
            <person name="Marsischky G."/>
            <person name="Kolodner R.D."/>
            <person name="LaBaer J."/>
        </authorList>
    </citation>
    <scope>NUCLEOTIDE SEQUENCE [GENOMIC DNA]</scope>
    <source>
        <strain>ATCC 204508 / S288c</strain>
    </source>
</reference>
<reference key="4">
    <citation type="journal article" date="1997" name="Yeast">
        <title>Cloning of the multicopy suppressor gene SUR7: evidence for a functional relationship between the yeast actin-binding protein Rvs167 and a putative membranous protein.</title>
        <authorList>
            <person name="Sivadon P."/>
            <person name="Peypouquet M.-F."/>
            <person name="Doignon F."/>
            <person name="Aigle M."/>
            <person name="Crouzet M."/>
        </authorList>
    </citation>
    <scope>CHARACTERIZATION</scope>
</reference>
<reference key="5">
    <citation type="journal article" date="2002" name="Mol. Cell. Biol.">
        <title>The Sur7p family defines novel cortical domains in Saccharomyces cerevisiae, affects sphingolipid metabolism, and is involved in sporulation.</title>
        <authorList>
            <person name="Young M.E."/>
            <person name="Karpova T.S."/>
            <person name="Bruegger B."/>
            <person name="Moschenross D.M."/>
            <person name="Wang G.K."/>
            <person name="Schneiter R."/>
            <person name="Wieland F.T."/>
            <person name="Cooper J.A."/>
        </authorList>
    </citation>
    <scope>FUNCTION</scope>
    <scope>SUBCELLULAR LOCATION</scope>
</reference>
<reference key="6">
    <citation type="journal article" date="2002" name="Proteomics">
        <title>Subproteomics: identification of plasma membrane proteins from the yeast Saccharomyces cerevisiae.</title>
        <authorList>
            <person name="Navarre C."/>
            <person name="Degand H."/>
            <person name="Bennett K.L."/>
            <person name="Crawford J.S."/>
            <person name="Moertz E."/>
            <person name="Boutry M."/>
        </authorList>
    </citation>
    <scope>SUBCELLULAR LOCATION</scope>
    <scope>IDENTIFICATION BY MASS SPECTROMETRY</scope>
</reference>
<reference key="7">
    <citation type="journal article" date="2003" name="Nature">
        <title>Global analysis of protein localization in budding yeast.</title>
        <authorList>
            <person name="Huh W.-K."/>
            <person name="Falvo J.V."/>
            <person name="Gerke L.C."/>
            <person name="Carroll A.S."/>
            <person name="Howson R.W."/>
            <person name="Weissman J.S."/>
            <person name="O'Shea E.K."/>
        </authorList>
    </citation>
    <scope>SUBCELLULAR LOCATION [LARGE SCALE ANALYSIS]</scope>
</reference>
<reference key="8">
    <citation type="journal article" date="2003" name="Nature">
        <title>Global analysis of protein expression in yeast.</title>
        <authorList>
            <person name="Ghaemmaghami S."/>
            <person name="Huh W.-K."/>
            <person name="Bower K."/>
            <person name="Howson R.W."/>
            <person name="Belle A."/>
            <person name="Dephoure N."/>
            <person name="O'Shea E.K."/>
            <person name="Weissman J.S."/>
        </authorList>
    </citation>
    <scope>LEVEL OF PROTEIN EXPRESSION [LARGE SCALE ANALYSIS]</scope>
</reference>
<reference key="9">
    <citation type="journal article" date="2004" name="J. Cell Sci.">
        <title>Distribution of Can1p into stable domains reflects lateral protein segregation within the plasma membrane of living S. cerevisiae cells.</title>
        <authorList>
            <person name="Malinska K."/>
            <person name="Malinsky J."/>
            <person name="Opekarova M."/>
            <person name="Tanner W."/>
        </authorList>
    </citation>
    <scope>SUBCELLULAR LOCATION</scope>
</reference>
<reference key="10">
    <citation type="journal article" date="2006" name="Nature">
        <title>Eisosomes mark static sites of endocytosis.</title>
        <authorList>
            <person name="Walther T.C."/>
            <person name="Brickner J.H."/>
            <person name="Aguilar P.S."/>
            <person name="Bernales S."/>
            <person name="Pantoja C."/>
            <person name="Walter P."/>
        </authorList>
    </citation>
    <scope>SUBCELLULAR LOCATION</scope>
</reference>
<reference key="11">
    <citation type="journal article" date="2006" name="Proc. Natl. Acad. Sci. U.S.A.">
        <title>A global topology map of the Saccharomyces cerevisiae membrane proteome.</title>
        <authorList>
            <person name="Kim H."/>
            <person name="Melen K."/>
            <person name="Oesterberg M."/>
            <person name="von Heijne G."/>
        </authorList>
    </citation>
    <scope>TOPOLOGY [LARGE SCALE ANALYSIS]</scope>
    <source>
        <strain>ATCC 208353 / W303-1A</strain>
    </source>
</reference>
<reference key="12">
    <citation type="journal article" date="2007" name="J. Proteome Res.">
        <title>Large-scale phosphorylation analysis of alpha-factor-arrested Saccharomyces cerevisiae.</title>
        <authorList>
            <person name="Li X."/>
            <person name="Gerber S.A."/>
            <person name="Rudner A.D."/>
            <person name="Beausoleil S.A."/>
            <person name="Haas W."/>
            <person name="Villen J."/>
            <person name="Elias J.E."/>
            <person name="Gygi S.P."/>
        </authorList>
    </citation>
    <scope>PHOSPHORYLATION [LARGE SCALE ANALYSIS] AT SER-301</scope>
    <scope>IDENTIFICATION BY MASS SPECTROMETRY [LARGE SCALE ANALYSIS]</scope>
    <source>
        <strain>ADR376</strain>
    </source>
</reference>
<reference key="13">
    <citation type="journal article" date="2007" name="Proc. Natl. Acad. Sci. U.S.A.">
        <title>Analysis of phosphorylation sites on proteins from Saccharomyces cerevisiae by electron transfer dissociation (ETD) mass spectrometry.</title>
        <authorList>
            <person name="Chi A."/>
            <person name="Huttenhower C."/>
            <person name="Geer L.Y."/>
            <person name="Coon J.J."/>
            <person name="Syka J.E.P."/>
            <person name="Bai D.L."/>
            <person name="Shabanowitz J."/>
            <person name="Burke D.J."/>
            <person name="Troyanskaya O.G."/>
            <person name="Hunt D.F."/>
        </authorList>
    </citation>
    <scope>PHOSPHORYLATION [LARGE SCALE ANALYSIS] AT SER-301</scope>
    <scope>IDENTIFICATION BY MASS SPECTROMETRY [LARGE SCALE ANALYSIS]</scope>
</reference>
<reference key="14">
    <citation type="journal article" date="2009" name="Science">
        <title>Global analysis of Cdk1 substrate phosphorylation sites provides insights into evolution.</title>
        <authorList>
            <person name="Holt L.J."/>
            <person name="Tuch B.B."/>
            <person name="Villen J."/>
            <person name="Johnson A.D."/>
            <person name="Gygi S.P."/>
            <person name="Morgan D.O."/>
        </authorList>
    </citation>
    <scope>PHOSPHORYLATION [LARGE SCALE ANALYSIS] AT SER-293 AND SER-301</scope>
    <scope>IDENTIFICATION BY MASS SPECTROMETRY [LARGE SCALE ANALYSIS]</scope>
</reference>
<name>SUR7_YEAST</name>
<proteinExistence type="evidence at protein level"/>
<comment type="function">
    <text evidence="2">Involved in sporulation and affects the sphingolipid composition of the plasma membrane. Probably involved in endocytosis.</text>
</comment>
<comment type="subcellular location">
    <subcellularLocation>
        <location evidence="2 3 4 6 7">Cell membrane</location>
        <topology evidence="2 3 4 6 7">Multi-pass membrane protein</topology>
    </subcellularLocation>
    <text>Localizes at eisosomes, structures which colocalize with sites of protein and lipid endocytosis.</text>
</comment>
<comment type="miscellaneous">
    <text evidence="5">Present with 17000 molecules/cell in log phase SD medium.</text>
</comment>
<comment type="similarity">
    <text evidence="8">Belongs to the SUR7 family.</text>
</comment>
<organism>
    <name type="scientific">Saccharomyces cerevisiae (strain ATCC 204508 / S288c)</name>
    <name type="common">Baker's yeast</name>
    <dbReference type="NCBI Taxonomy" id="559292"/>
    <lineage>
        <taxon>Eukaryota</taxon>
        <taxon>Fungi</taxon>
        <taxon>Dikarya</taxon>
        <taxon>Ascomycota</taxon>
        <taxon>Saccharomycotina</taxon>
        <taxon>Saccharomycetes</taxon>
        <taxon>Saccharomycetales</taxon>
        <taxon>Saccharomycetaceae</taxon>
        <taxon>Saccharomyces</taxon>
    </lineage>
</organism>
<protein>
    <recommendedName>
        <fullName>Protein SUR7</fullName>
    </recommendedName>
</protein>
<keyword id="KW-1003">Cell membrane</keyword>
<keyword id="KW-0254">Endocytosis</keyword>
<keyword id="KW-0325">Glycoprotein</keyword>
<keyword id="KW-0472">Membrane</keyword>
<keyword id="KW-0597">Phosphoprotein</keyword>
<keyword id="KW-1185">Reference proteome</keyword>
<keyword id="KW-0749">Sporulation</keyword>
<keyword id="KW-0812">Transmembrane</keyword>
<keyword id="KW-1133">Transmembrane helix</keyword>
<gene>
    <name type="primary">SUR7</name>
    <name type="ordered locus">YML052W</name>
    <name type="ORF">YM9958.11</name>
</gene>
<feature type="chain" id="PRO_0000072317" description="Protein SUR7">
    <location>
        <begin position="1"/>
        <end position="302"/>
    </location>
</feature>
<feature type="topological domain" description="Cytoplasmic" evidence="1">
    <location>
        <begin position="1"/>
        <end position="10"/>
    </location>
</feature>
<feature type="transmembrane region" description="Helical" evidence="1">
    <location>
        <begin position="11"/>
        <end position="31"/>
    </location>
</feature>
<feature type="topological domain" description="Extracellular" evidence="1">
    <location>
        <begin position="32"/>
        <end position="114"/>
    </location>
</feature>
<feature type="transmembrane region" description="Helical" evidence="1">
    <location>
        <begin position="115"/>
        <end position="135"/>
    </location>
</feature>
<feature type="topological domain" description="Cytoplasmic" evidence="1">
    <location>
        <begin position="136"/>
        <end position="145"/>
    </location>
</feature>
<feature type="transmembrane region" description="Helical" evidence="1">
    <location>
        <begin position="146"/>
        <end position="166"/>
    </location>
</feature>
<feature type="topological domain" description="Extracellular" evidence="1">
    <location>
        <begin position="167"/>
        <end position="189"/>
    </location>
</feature>
<feature type="transmembrane region" description="Helical" evidence="1">
    <location>
        <begin position="190"/>
        <end position="210"/>
    </location>
</feature>
<feature type="topological domain" description="Cytoplasmic" evidence="1">
    <location>
        <begin position="211"/>
        <end position="302"/>
    </location>
</feature>
<feature type="modified residue" description="Phosphoserine" evidence="11">
    <location>
        <position position="293"/>
    </location>
</feature>
<feature type="modified residue" description="Phosphoserine" evidence="9 10 11">
    <location>
        <position position="301"/>
    </location>
</feature>
<feature type="glycosylation site" description="N-linked (GlcNAc...) asparagine" evidence="1">
    <location>
        <position position="47"/>
    </location>
</feature>
<accession>P54003</accession>
<accession>D6VZC3</accession>
<evidence type="ECO:0000255" key="1"/>
<evidence type="ECO:0000269" key="2">
    <source>
    </source>
</evidence>
<evidence type="ECO:0000269" key="3">
    <source>
    </source>
</evidence>
<evidence type="ECO:0000269" key="4">
    <source>
    </source>
</evidence>
<evidence type="ECO:0000269" key="5">
    <source>
    </source>
</evidence>
<evidence type="ECO:0000269" key="6">
    <source>
    </source>
</evidence>
<evidence type="ECO:0000269" key="7">
    <source>
    </source>
</evidence>
<evidence type="ECO:0000305" key="8"/>
<evidence type="ECO:0007744" key="9">
    <source>
    </source>
</evidence>
<evidence type="ECO:0007744" key="10">
    <source>
    </source>
</evidence>
<evidence type="ECO:0007744" key="11">
    <source>
    </source>
</evidence>
<sequence>MVKVWNIVLRLVVLLFLAGNTLLLILMIISGATDHYPVNRFYWVQGNTTGIPNAGDETRWTFWGACLQDKDGSDTCTSNLAPAYPISPVDNFNTHINVPHQFISKRDAFYYLTRFSFCFFWIALAFVGVSFILYVLTWCSKMLSEMVLILMSFGFVFNTAAVVLQTAASAMAKNAFHDDHRSAQLGASMMGMAWASVFLCIVEFILLVFWSVRARLASTYSIDNSRYRTSSRWNPFHREKEQATDPILTATGPEDMQQSASIVGPSSNANPVTATAATENQPKGINFFTIRKSHERPDDVSV</sequence>
<dbReference type="EMBL" id="Z46729">
    <property type="protein sequence ID" value="CAA86724.1"/>
    <property type="molecule type" value="Genomic_DNA"/>
</dbReference>
<dbReference type="EMBL" id="AY557986">
    <property type="protein sequence ID" value="AAS56312.1"/>
    <property type="molecule type" value="Genomic_DNA"/>
</dbReference>
<dbReference type="EMBL" id="BK006946">
    <property type="protein sequence ID" value="DAA09847.1"/>
    <property type="molecule type" value="Genomic_DNA"/>
</dbReference>
<dbReference type="PIR" id="S49809">
    <property type="entry name" value="S49809"/>
</dbReference>
<dbReference type="RefSeq" id="NP_013660.1">
    <property type="nucleotide sequence ID" value="NM_001182410.1"/>
</dbReference>
<dbReference type="BioGRID" id="35116">
    <property type="interactions" value="140"/>
</dbReference>
<dbReference type="FunCoup" id="P54003">
    <property type="interactions" value="98"/>
</dbReference>
<dbReference type="IntAct" id="P54003">
    <property type="interactions" value="4"/>
</dbReference>
<dbReference type="MINT" id="P54003"/>
<dbReference type="STRING" id="4932.YML052W"/>
<dbReference type="TCDB" id="1.H.1.7.1">
    <property type="family name" value="the claudin tight junction (claudin1) family"/>
</dbReference>
<dbReference type="TCDB" id="8.A.148.1.1">
    <property type="family name" value="the plasma membrane organizing center, eisosome (eisosome) family"/>
</dbReference>
<dbReference type="GlyCosmos" id="P54003">
    <property type="glycosylation" value="1 site, No reported glycans"/>
</dbReference>
<dbReference type="GlyGen" id="P54003">
    <property type="glycosylation" value="1 site"/>
</dbReference>
<dbReference type="iPTMnet" id="P54003"/>
<dbReference type="PaxDb" id="4932-YML052W"/>
<dbReference type="PeptideAtlas" id="P54003"/>
<dbReference type="DNASU" id="854953"/>
<dbReference type="EnsemblFungi" id="YML052W_mRNA">
    <property type="protein sequence ID" value="YML052W"/>
    <property type="gene ID" value="YML052W"/>
</dbReference>
<dbReference type="GeneID" id="854953"/>
<dbReference type="KEGG" id="sce:YML052W"/>
<dbReference type="AGR" id="SGD:S000004516"/>
<dbReference type="SGD" id="S000004516">
    <property type="gene designation" value="SUR7"/>
</dbReference>
<dbReference type="VEuPathDB" id="FungiDB:YML052W"/>
<dbReference type="eggNOG" id="ENOG502RKFF">
    <property type="taxonomic scope" value="Eukaryota"/>
</dbReference>
<dbReference type="HOGENOM" id="CLU_059603_1_0_1"/>
<dbReference type="InParanoid" id="P54003"/>
<dbReference type="OMA" id="PLNKFYW"/>
<dbReference type="OrthoDB" id="5419460at2759"/>
<dbReference type="BioCyc" id="YEAST:G3O-32649-MONOMER"/>
<dbReference type="BioGRID-ORCS" id="854953">
    <property type="hits" value="2 hits in 10 CRISPR screens"/>
</dbReference>
<dbReference type="PRO" id="PR:P54003"/>
<dbReference type="Proteomes" id="UP000002311">
    <property type="component" value="Chromosome XIII"/>
</dbReference>
<dbReference type="RNAct" id="P54003">
    <property type="molecule type" value="protein"/>
</dbReference>
<dbReference type="GO" id="GO:0005938">
    <property type="term" value="C:cell cortex"/>
    <property type="evidence" value="ECO:0000314"/>
    <property type="project" value="SGD"/>
</dbReference>
<dbReference type="GO" id="GO:0071944">
    <property type="term" value="C:cell periphery"/>
    <property type="evidence" value="ECO:0007005"/>
    <property type="project" value="SGD"/>
</dbReference>
<dbReference type="GO" id="GO:0032126">
    <property type="term" value="C:eisosome"/>
    <property type="evidence" value="ECO:0000314"/>
    <property type="project" value="SGD"/>
</dbReference>
<dbReference type="GO" id="GO:0045121">
    <property type="term" value="C:membrane raft"/>
    <property type="evidence" value="ECO:0000318"/>
    <property type="project" value="GO_Central"/>
</dbReference>
<dbReference type="GO" id="GO:0005739">
    <property type="term" value="C:mitochondrion"/>
    <property type="evidence" value="ECO:0007005"/>
    <property type="project" value="SGD"/>
</dbReference>
<dbReference type="GO" id="GO:0005886">
    <property type="term" value="C:plasma membrane"/>
    <property type="evidence" value="ECO:0000314"/>
    <property type="project" value="SGD"/>
</dbReference>
<dbReference type="GO" id="GO:0030437">
    <property type="term" value="P:ascospore formation"/>
    <property type="evidence" value="ECO:0000315"/>
    <property type="project" value="SGD"/>
</dbReference>
<dbReference type="GO" id="GO:0030866">
    <property type="term" value="P:cortical actin cytoskeleton organization"/>
    <property type="evidence" value="ECO:0000318"/>
    <property type="project" value="GO_Central"/>
</dbReference>
<dbReference type="GO" id="GO:0006897">
    <property type="term" value="P:endocytosis"/>
    <property type="evidence" value="ECO:0000315"/>
    <property type="project" value="SGD"/>
</dbReference>
<dbReference type="GO" id="GO:0031505">
    <property type="term" value="P:fungal-type cell wall organization"/>
    <property type="evidence" value="ECO:0000318"/>
    <property type="project" value="GO_Central"/>
</dbReference>
<dbReference type="GO" id="GO:0097446">
    <property type="term" value="P:protein localization to eisosome filament"/>
    <property type="evidence" value="ECO:0000315"/>
    <property type="project" value="SGD"/>
</dbReference>
<dbReference type="GO" id="GO:0032185">
    <property type="term" value="P:septin cytoskeleton organization"/>
    <property type="evidence" value="ECO:0000318"/>
    <property type="project" value="GO_Central"/>
</dbReference>
<dbReference type="FunFam" id="1.20.140.150:FF:000052">
    <property type="entry name" value="Sur7p"/>
    <property type="match status" value="1"/>
</dbReference>
<dbReference type="Gene3D" id="1.20.140.150">
    <property type="match status" value="1"/>
</dbReference>
<dbReference type="InterPro" id="IPR009571">
    <property type="entry name" value="SUR7/Rim9-like_fungi"/>
</dbReference>
<dbReference type="PANTHER" id="PTHR36414">
    <property type="entry name" value="PROTEIN SUR7"/>
    <property type="match status" value="1"/>
</dbReference>
<dbReference type="PANTHER" id="PTHR36414:SF1">
    <property type="entry name" value="PROTEIN SUR7"/>
    <property type="match status" value="1"/>
</dbReference>
<dbReference type="Pfam" id="PF06687">
    <property type="entry name" value="SUR7"/>
    <property type="match status" value="1"/>
</dbReference>